<reference key="1">
    <citation type="submission" date="2007-12" db="EMBL/GenBank/DDBJ databases">
        <title>Complete sequence of Methylobacterium extorquens PA1.</title>
        <authorList>
            <consortium name="US DOE Joint Genome Institute"/>
            <person name="Copeland A."/>
            <person name="Lucas S."/>
            <person name="Lapidus A."/>
            <person name="Barry K."/>
            <person name="Glavina del Rio T."/>
            <person name="Dalin E."/>
            <person name="Tice H."/>
            <person name="Pitluck S."/>
            <person name="Saunders E."/>
            <person name="Brettin T."/>
            <person name="Bruce D."/>
            <person name="Detter J.C."/>
            <person name="Han C."/>
            <person name="Schmutz J."/>
            <person name="Larimer F."/>
            <person name="Land M."/>
            <person name="Hauser L."/>
            <person name="Kyrpides N."/>
            <person name="Kim E."/>
            <person name="Marx C."/>
            <person name="Richardson P."/>
        </authorList>
    </citation>
    <scope>NUCLEOTIDE SEQUENCE [LARGE SCALE GENOMIC DNA]</scope>
    <source>
        <strain>PA1</strain>
    </source>
</reference>
<feature type="chain" id="PRO_1000125966" description="Small ribosomal subunit protein uS7">
    <location>
        <begin position="1"/>
        <end position="156"/>
    </location>
</feature>
<dbReference type="EMBL" id="CP000908">
    <property type="protein sequence ID" value="ABY30553.1"/>
    <property type="molecule type" value="Genomic_DNA"/>
</dbReference>
<dbReference type="RefSeq" id="WP_004447768.1">
    <property type="nucleotide sequence ID" value="NC_010172.1"/>
</dbReference>
<dbReference type="SMR" id="A9W4P7"/>
<dbReference type="GeneID" id="72989846"/>
<dbReference type="KEGG" id="mex:Mext_2158"/>
<dbReference type="eggNOG" id="COG0049">
    <property type="taxonomic scope" value="Bacteria"/>
</dbReference>
<dbReference type="HOGENOM" id="CLU_072226_1_1_5"/>
<dbReference type="BioCyc" id="MEXT419610:MEXT_RS10895-MONOMER"/>
<dbReference type="GO" id="GO:0015935">
    <property type="term" value="C:small ribosomal subunit"/>
    <property type="evidence" value="ECO:0007669"/>
    <property type="project" value="InterPro"/>
</dbReference>
<dbReference type="GO" id="GO:0019843">
    <property type="term" value="F:rRNA binding"/>
    <property type="evidence" value="ECO:0007669"/>
    <property type="project" value="UniProtKB-UniRule"/>
</dbReference>
<dbReference type="GO" id="GO:0003735">
    <property type="term" value="F:structural constituent of ribosome"/>
    <property type="evidence" value="ECO:0007669"/>
    <property type="project" value="InterPro"/>
</dbReference>
<dbReference type="GO" id="GO:0000049">
    <property type="term" value="F:tRNA binding"/>
    <property type="evidence" value="ECO:0007669"/>
    <property type="project" value="UniProtKB-UniRule"/>
</dbReference>
<dbReference type="GO" id="GO:0006412">
    <property type="term" value="P:translation"/>
    <property type="evidence" value="ECO:0007669"/>
    <property type="project" value="UniProtKB-UniRule"/>
</dbReference>
<dbReference type="CDD" id="cd14869">
    <property type="entry name" value="uS7_Bacteria"/>
    <property type="match status" value="1"/>
</dbReference>
<dbReference type="FunFam" id="1.10.455.10:FF:000001">
    <property type="entry name" value="30S ribosomal protein S7"/>
    <property type="match status" value="1"/>
</dbReference>
<dbReference type="Gene3D" id="1.10.455.10">
    <property type="entry name" value="Ribosomal protein S7 domain"/>
    <property type="match status" value="1"/>
</dbReference>
<dbReference type="HAMAP" id="MF_00480_B">
    <property type="entry name" value="Ribosomal_uS7_B"/>
    <property type="match status" value="1"/>
</dbReference>
<dbReference type="InterPro" id="IPR000235">
    <property type="entry name" value="Ribosomal_uS7"/>
</dbReference>
<dbReference type="InterPro" id="IPR005717">
    <property type="entry name" value="Ribosomal_uS7_bac/org-type"/>
</dbReference>
<dbReference type="InterPro" id="IPR020606">
    <property type="entry name" value="Ribosomal_uS7_CS"/>
</dbReference>
<dbReference type="InterPro" id="IPR023798">
    <property type="entry name" value="Ribosomal_uS7_dom"/>
</dbReference>
<dbReference type="InterPro" id="IPR036823">
    <property type="entry name" value="Ribosomal_uS7_dom_sf"/>
</dbReference>
<dbReference type="NCBIfam" id="TIGR01029">
    <property type="entry name" value="rpsG_bact"/>
    <property type="match status" value="1"/>
</dbReference>
<dbReference type="PANTHER" id="PTHR11205">
    <property type="entry name" value="RIBOSOMAL PROTEIN S7"/>
    <property type="match status" value="1"/>
</dbReference>
<dbReference type="Pfam" id="PF00177">
    <property type="entry name" value="Ribosomal_S7"/>
    <property type="match status" value="1"/>
</dbReference>
<dbReference type="PIRSF" id="PIRSF002122">
    <property type="entry name" value="RPS7p_RPS7a_RPS5e_RPS7o"/>
    <property type="match status" value="1"/>
</dbReference>
<dbReference type="SUPFAM" id="SSF47973">
    <property type="entry name" value="Ribosomal protein S7"/>
    <property type="match status" value="1"/>
</dbReference>
<dbReference type="PROSITE" id="PS00052">
    <property type="entry name" value="RIBOSOMAL_S7"/>
    <property type="match status" value="1"/>
</dbReference>
<protein>
    <recommendedName>
        <fullName evidence="1">Small ribosomal subunit protein uS7</fullName>
    </recommendedName>
    <alternativeName>
        <fullName evidence="2">30S ribosomal protein S7</fullName>
    </alternativeName>
</protein>
<proteinExistence type="inferred from homology"/>
<keyword id="KW-0687">Ribonucleoprotein</keyword>
<keyword id="KW-0689">Ribosomal protein</keyword>
<keyword id="KW-0694">RNA-binding</keyword>
<keyword id="KW-0699">rRNA-binding</keyword>
<keyword id="KW-0820">tRNA-binding</keyword>
<accession>A9W4P7</accession>
<evidence type="ECO:0000255" key="1">
    <source>
        <dbReference type="HAMAP-Rule" id="MF_00480"/>
    </source>
</evidence>
<evidence type="ECO:0000305" key="2"/>
<gene>
    <name evidence="1" type="primary">rpsG</name>
    <name type="ordered locus">Mext_2158</name>
</gene>
<organism>
    <name type="scientific">Methylorubrum extorquens (strain PA1)</name>
    <name type="common">Methylobacterium extorquens</name>
    <dbReference type="NCBI Taxonomy" id="419610"/>
    <lineage>
        <taxon>Bacteria</taxon>
        <taxon>Pseudomonadati</taxon>
        <taxon>Pseudomonadota</taxon>
        <taxon>Alphaproteobacteria</taxon>
        <taxon>Hyphomicrobiales</taxon>
        <taxon>Methylobacteriaceae</taxon>
        <taxon>Methylorubrum</taxon>
    </lineage>
</organism>
<comment type="function">
    <text evidence="1">One of the primary rRNA binding proteins, it binds directly to 16S rRNA where it nucleates assembly of the head domain of the 30S subunit. Is located at the subunit interface close to the decoding center, probably blocks exit of the E-site tRNA.</text>
</comment>
<comment type="subunit">
    <text evidence="1">Part of the 30S ribosomal subunit. Contacts proteins S9 and S11.</text>
</comment>
<comment type="similarity">
    <text evidence="1">Belongs to the universal ribosomal protein uS7 family.</text>
</comment>
<sequence>MSRRHSAEKREIIPDAKYGDVVLTKFMNSIMYEGKKSTAERIVYGAFDIVENRARANPIEVFRAALDNVAPAIEVRSRRVGGATYQVPVEVRTERRQALAIRWLIQAARGRNDRTMIERLSAELLDAANNRGNAVKKREDTHRMAEANRAFSHYRW</sequence>
<name>RS7_METEP</name>